<keyword id="KW-0165">Cleavage on pair of basic residues</keyword>
<keyword id="KW-0217">Developmental protein</keyword>
<keyword id="KW-1015">Disulfide bond</keyword>
<keyword id="KW-0245">EGF-like domain</keyword>
<keyword id="KW-0325">Glycoprotein</keyword>
<keyword id="KW-0378">Hydrolase</keyword>
<keyword id="KW-0479">Metal-binding</keyword>
<keyword id="KW-0482">Metalloprotease</keyword>
<keyword id="KW-0645">Protease</keyword>
<keyword id="KW-1185">Reference proteome</keyword>
<keyword id="KW-0964">Secreted</keyword>
<keyword id="KW-0732">Signal</keyword>
<keyword id="KW-0862">Zinc</keyword>
<keyword id="KW-0865">Zymogen</keyword>
<gene>
    <name evidence="4" type="primary">nas-36</name>
    <name type="ORF">CBG11886</name>
</gene>
<comment type="function">
    <text evidence="2 4">Mtalloprotease. Involved in molting, a process during larval stages in which a new cuticle is formed and the old cuticle is shed.</text>
</comment>
<comment type="cofactor">
    <cofactor evidence="8">
        <name>Zn(2+)</name>
        <dbReference type="ChEBI" id="CHEBI:29105"/>
    </cofactor>
    <text evidence="8">Binds 1 zinc ion per subunit.</text>
</comment>
<comment type="subcellular location">
    <subcellularLocation>
        <location evidence="5">Secreted</location>
    </subcellularLocation>
</comment>
<proteinExistence type="inferred from homology"/>
<organism>
    <name type="scientific">Caenorhabditis briggsae</name>
    <dbReference type="NCBI Taxonomy" id="6238"/>
    <lineage>
        <taxon>Eukaryota</taxon>
        <taxon>Metazoa</taxon>
        <taxon>Ecdysozoa</taxon>
        <taxon>Nematoda</taxon>
        <taxon>Chromadorea</taxon>
        <taxon>Rhabditida</taxon>
        <taxon>Rhabditina</taxon>
        <taxon>Rhabditomorpha</taxon>
        <taxon>Rhabditoidea</taxon>
        <taxon>Rhabditidae</taxon>
        <taxon>Peloderinae</taxon>
        <taxon>Caenorhabditis</taxon>
    </lineage>
</organism>
<sequence>MRRFCRLLFLNSLLSISICKAQNPAHLVADEFKEHFNVEEKQLETVEELLLKMKKLAHSRSFAGREFGHDAVEDSKKEVAISTQQGTIDKKVSPFLFEGDIFLSRRQAVDILKALSKDKTKRLRRSFVSDKTATWKSLPIKYRFHESIDFYTISQIIAAIRFWEDSTCITFENVSDAPVGDYIEFFSGQGCYSMIGRNGGRQGISIGESCVKMGVIEHEIGHALGLWHEQSRPDALGYVSIERDFILPSYISDFLQRDDEIDTLGIPYDLGSVMHYGSTAFSVDQKSKTVVTRDSLYQQTIGQREKLSFYDVATINTAYCKEECKSEKTECEYGGYMRPSKCSECLCPDGLGGEKCEKNEDAKNAECGGILELSDEWKTIESPNYPDPGYEADQKCSWLLKAPKGKRVEIEFIEDFSFLCTSTCVDFVELKISDDLRNTGFRFCCYDKPEISFVSQIDTAIVIFRSQLSADIGFKIQVRSTESEPRTTIAPTIITTTMAPITVDTPNVWADWGEWSMCSRTCGGCGIRSRVRSCRSKKCEGRRQEFGTCNLKACPVDKHCAKLLSNNRLCNGKVCTKNDIAISSCDAPQCCPPFVNVDGMCQSDQENHHDELWLSI</sequence>
<dbReference type="EC" id="3.4.24.-" evidence="2"/>
<dbReference type="EMBL" id="HE601268">
    <property type="protein sequence ID" value="CAP30957.2"/>
    <property type="molecule type" value="Genomic_DNA"/>
</dbReference>
<dbReference type="SMR" id="Q61EX6"/>
<dbReference type="STRING" id="6238.Q61EX6"/>
<dbReference type="MEROPS" id="M12.319"/>
<dbReference type="GlyCosmos" id="Q61EX6">
    <property type="glycosylation" value="1 site, No reported glycans"/>
</dbReference>
<dbReference type="EnsemblMetazoa" id="CBG11886.1">
    <property type="protein sequence ID" value="CBG11886.1"/>
    <property type="gene ID" value="WBGene00032925"/>
</dbReference>
<dbReference type="WormBase" id="CBG11886">
    <property type="protein sequence ID" value="CBP28845"/>
    <property type="gene ID" value="WBGene00032925"/>
    <property type="gene designation" value="Cbr-nas-36"/>
</dbReference>
<dbReference type="eggNOG" id="KOG3714">
    <property type="taxonomic scope" value="Eukaryota"/>
</dbReference>
<dbReference type="HOGENOM" id="CLU_017286_1_3_1"/>
<dbReference type="InParanoid" id="Q61EX6"/>
<dbReference type="OMA" id="INEAYCK"/>
<dbReference type="Proteomes" id="UP000008549">
    <property type="component" value="Unassembled WGS sequence"/>
</dbReference>
<dbReference type="GO" id="GO:0005576">
    <property type="term" value="C:extracellular region"/>
    <property type="evidence" value="ECO:0007669"/>
    <property type="project" value="UniProtKB-SubCell"/>
</dbReference>
<dbReference type="GO" id="GO:0004222">
    <property type="term" value="F:metalloendopeptidase activity"/>
    <property type="evidence" value="ECO:0000318"/>
    <property type="project" value="GO_Central"/>
</dbReference>
<dbReference type="GO" id="GO:0008270">
    <property type="term" value="F:zinc ion binding"/>
    <property type="evidence" value="ECO:0007669"/>
    <property type="project" value="InterPro"/>
</dbReference>
<dbReference type="GO" id="GO:0018996">
    <property type="term" value="P:molting cycle, collagen and cuticulin-based cuticle"/>
    <property type="evidence" value="ECO:0007669"/>
    <property type="project" value="InterPro"/>
</dbReference>
<dbReference type="GO" id="GO:0006508">
    <property type="term" value="P:proteolysis"/>
    <property type="evidence" value="ECO:0007669"/>
    <property type="project" value="UniProtKB-KW"/>
</dbReference>
<dbReference type="CDD" id="cd00041">
    <property type="entry name" value="CUB"/>
    <property type="match status" value="1"/>
</dbReference>
<dbReference type="CDD" id="cd04280">
    <property type="entry name" value="ZnMc_astacin_like"/>
    <property type="match status" value="1"/>
</dbReference>
<dbReference type="FunFam" id="2.60.120.290:FF:000059">
    <property type="entry name" value="Zinc metalloproteinase"/>
    <property type="match status" value="1"/>
</dbReference>
<dbReference type="FunFam" id="3.40.390.10:FF:000028">
    <property type="entry name" value="Zinc metalloproteinase"/>
    <property type="match status" value="1"/>
</dbReference>
<dbReference type="Gene3D" id="3.40.390.10">
    <property type="entry name" value="Collagenase (Catalytic Domain)"/>
    <property type="match status" value="1"/>
</dbReference>
<dbReference type="Gene3D" id="2.60.120.290">
    <property type="entry name" value="Spermadhesin, CUB domain"/>
    <property type="match status" value="1"/>
</dbReference>
<dbReference type="Gene3D" id="2.20.100.10">
    <property type="entry name" value="Thrombospondin type-1 (TSP1) repeat"/>
    <property type="match status" value="1"/>
</dbReference>
<dbReference type="InterPro" id="IPR034035">
    <property type="entry name" value="Astacin-like_dom"/>
</dbReference>
<dbReference type="InterPro" id="IPR000859">
    <property type="entry name" value="CUB_dom"/>
</dbReference>
<dbReference type="InterPro" id="IPR024079">
    <property type="entry name" value="MetalloPept_cat_dom_sf"/>
</dbReference>
<dbReference type="InterPro" id="IPR017050">
    <property type="entry name" value="Metallopeptidase_nem"/>
</dbReference>
<dbReference type="InterPro" id="IPR001506">
    <property type="entry name" value="Peptidase_M12A"/>
</dbReference>
<dbReference type="InterPro" id="IPR006026">
    <property type="entry name" value="Peptidase_Metallo"/>
</dbReference>
<dbReference type="InterPro" id="IPR035914">
    <property type="entry name" value="Sperma_CUB_dom_sf"/>
</dbReference>
<dbReference type="InterPro" id="IPR000884">
    <property type="entry name" value="TSP1_rpt"/>
</dbReference>
<dbReference type="InterPro" id="IPR036383">
    <property type="entry name" value="TSP1_rpt_sf"/>
</dbReference>
<dbReference type="PANTHER" id="PTHR10127">
    <property type="entry name" value="DISCOIDIN, CUB, EGF, LAMININ , AND ZINC METALLOPROTEASE DOMAIN CONTAINING"/>
    <property type="match status" value="1"/>
</dbReference>
<dbReference type="PANTHER" id="PTHR10127:SF849">
    <property type="entry name" value="ZINC METALLOPROTEINASE NAS-36"/>
    <property type="match status" value="1"/>
</dbReference>
<dbReference type="Pfam" id="PF01400">
    <property type="entry name" value="Astacin"/>
    <property type="match status" value="1"/>
</dbReference>
<dbReference type="Pfam" id="PF00431">
    <property type="entry name" value="CUB"/>
    <property type="match status" value="1"/>
</dbReference>
<dbReference type="Pfam" id="PF00090">
    <property type="entry name" value="TSP_1"/>
    <property type="match status" value="1"/>
</dbReference>
<dbReference type="PIRSF" id="PIRSF036365">
    <property type="entry name" value="Astacin_nematoda"/>
    <property type="match status" value="1"/>
</dbReference>
<dbReference type="PRINTS" id="PR00480">
    <property type="entry name" value="ASTACIN"/>
</dbReference>
<dbReference type="SMART" id="SM00042">
    <property type="entry name" value="CUB"/>
    <property type="match status" value="1"/>
</dbReference>
<dbReference type="SMART" id="SM00209">
    <property type="entry name" value="TSP1"/>
    <property type="match status" value="1"/>
</dbReference>
<dbReference type="SMART" id="SM00235">
    <property type="entry name" value="ZnMc"/>
    <property type="match status" value="1"/>
</dbReference>
<dbReference type="SUPFAM" id="SSF55486">
    <property type="entry name" value="Metalloproteases ('zincins'), catalytic domain"/>
    <property type="match status" value="1"/>
</dbReference>
<dbReference type="SUPFAM" id="SSF49854">
    <property type="entry name" value="Spermadhesin, CUB domain"/>
    <property type="match status" value="1"/>
</dbReference>
<dbReference type="SUPFAM" id="SSF82895">
    <property type="entry name" value="TSP-1 type 1 repeat"/>
    <property type="match status" value="1"/>
</dbReference>
<dbReference type="PROSITE" id="PS51864">
    <property type="entry name" value="ASTACIN"/>
    <property type="match status" value="1"/>
</dbReference>
<dbReference type="PROSITE" id="PS01180">
    <property type="entry name" value="CUB"/>
    <property type="match status" value="1"/>
</dbReference>
<dbReference type="PROSITE" id="PS00022">
    <property type="entry name" value="EGF_1"/>
    <property type="match status" value="1"/>
</dbReference>
<dbReference type="PROSITE" id="PS50092">
    <property type="entry name" value="TSP1"/>
    <property type="match status" value="1"/>
</dbReference>
<dbReference type="PROSITE" id="PS00142">
    <property type="entry name" value="ZINC_PROTEASE"/>
    <property type="match status" value="1"/>
</dbReference>
<feature type="signal peptide" evidence="5">
    <location>
        <begin position="1"/>
        <end position="21"/>
    </location>
</feature>
<feature type="propeptide" id="PRO_0000442248" evidence="3">
    <location>
        <begin position="22"/>
        <end position="125"/>
    </location>
</feature>
<feature type="chain" id="PRO_0000045126" description="Zinc metalloproteinase nas-36">
    <location>
        <begin position="126"/>
        <end position="616"/>
    </location>
</feature>
<feature type="domain" description="Peptidase M12A" evidence="8">
    <location>
        <begin position="126"/>
        <end position="321"/>
    </location>
</feature>
<feature type="domain" description="EGF-like">
    <location>
        <begin position="316"/>
        <end position="357"/>
    </location>
</feature>
<feature type="domain" description="CUB" evidence="6">
    <location>
        <begin position="367"/>
        <end position="481"/>
    </location>
</feature>
<feature type="domain" description="TSP type-1" evidence="7">
    <location>
        <begin position="506"/>
        <end position="555"/>
    </location>
</feature>
<feature type="active site" evidence="8">
    <location>
        <position position="219"/>
    </location>
</feature>
<feature type="binding site" evidence="8">
    <location>
        <position position="218"/>
    </location>
    <ligand>
        <name>Zn(2+)</name>
        <dbReference type="ChEBI" id="CHEBI:29105"/>
        <note>catalytic</note>
    </ligand>
</feature>
<feature type="binding site" evidence="8">
    <location>
        <position position="222"/>
    </location>
    <ligand>
        <name>Zn(2+)</name>
        <dbReference type="ChEBI" id="CHEBI:29105"/>
        <note>catalytic</note>
    </ligand>
</feature>
<feature type="binding site" evidence="8">
    <location>
        <position position="228"/>
    </location>
    <ligand>
        <name>Zn(2+)</name>
        <dbReference type="ChEBI" id="CHEBI:29105"/>
        <note>catalytic</note>
    </ligand>
</feature>
<feature type="glycosylation site" description="N-linked (GlcNAc...) asparagine" evidence="5">
    <location>
        <position position="173"/>
    </location>
</feature>
<feature type="disulfide bond" evidence="8">
    <location>
        <begin position="168"/>
        <end position="320"/>
    </location>
</feature>
<feature type="disulfide bond" evidence="8">
    <location>
        <begin position="191"/>
        <end position="210"/>
    </location>
</feature>
<feature type="disulfide bond" evidence="1">
    <location>
        <begin position="324"/>
        <end position="345"/>
    </location>
</feature>
<feature type="disulfide bond" evidence="1">
    <location>
        <begin position="347"/>
        <end position="356"/>
    </location>
</feature>
<feature type="disulfide bond" evidence="1">
    <location>
        <begin position="367"/>
        <end position="396"/>
    </location>
</feature>
<feature type="disulfide bond" evidence="1">
    <location>
        <begin position="424"/>
        <end position="444"/>
    </location>
</feature>
<feature type="disulfide bond" evidence="1">
    <location>
        <begin position="518"/>
        <end position="549"/>
    </location>
</feature>
<feature type="disulfide bond" evidence="1">
    <location>
        <begin position="522"/>
        <end position="554"/>
    </location>
</feature>
<feature type="disulfide bond" evidence="1">
    <location>
        <begin position="534"/>
        <end position="539"/>
    </location>
</feature>
<evidence type="ECO:0000250" key="1"/>
<evidence type="ECO:0000250" key="2">
    <source>
        <dbReference type="UniProtKB" id="D5FM38"/>
    </source>
</evidence>
<evidence type="ECO:0000250" key="3">
    <source>
        <dbReference type="UniProtKB" id="P13497"/>
    </source>
</evidence>
<evidence type="ECO:0000250" key="4">
    <source>
        <dbReference type="UniProtKB" id="Q18206"/>
    </source>
</evidence>
<evidence type="ECO:0000255" key="5"/>
<evidence type="ECO:0000255" key="6">
    <source>
        <dbReference type="PROSITE-ProRule" id="PRU00059"/>
    </source>
</evidence>
<evidence type="ECO:0000255" key="7">
    <source>
        <dbReference type="PROSITE-ProRule" id="PRU00210"/>
    </source>
</evidence>
<evidence type="ECO:0000255" key="8">
    <source>
        <dbReference type="PROSITE-ProRule" id="PRU01211"/>
    </source>
</evidence>
<reference key="1">
    <citation type="journal article" date="2003" name="PLoS Biol.">
        <title>The genome sequence of Caenorhabditis briggsae: a platform for comparative genomics.</title>
        <authorList>
            <person name="Stein L.D."/>
            <person name="Bao Z."/>
            <person name="Blasiar D."/>
            <person name="Blumenthal T."/>
            <person name="Brent M.R."/>
            <person name="Chen N."/>
            <person name="Chinwalla A."/>
            <person name="Clarke L."/>
            <person name="Clee C."/>
            <person name="Coghlan A."/>
            <person name="Coulson A."/>
            <person name="D'Eustachio P."/>
            <person name="Fitch D.H.A."/>
            <person name="Fulton L.A."/>
            <person name="Fulton R.E."/>
            <person name="Griffiths-Jones S."/>
            <person name="Harris T.W."/>
            <person name="Hillier L.W."/>
            <person name="Kamath R."/>
            <person name="Kuwabara P.E."/>
            <person name="Mardis E.R."/>
            <person name="Marra M.A."/>
            <person name="Miner T.L."/>
            <person name="Minx P."/>
            <person name="Mullikin J.C."/>
            <person name="Plumb R.W."/>
            <person name="Rogers J."/>
            <person name="Schein J.E."/>
            <person name="Sohrmann M."/>
            <person name="Spieth J."/>
            <person name="Stajich J.E."/>
            <person name="Wei C."/>
            <person name="Willey D."/>
            <person name="Wilson R.K."/>
            <person name="Durbin R.M."/>
            <person name="Waterston R.H."/>
        </authorList>
    </citation>
    <scope>NUCLEOTIDE SEQUENCE [LARGE SCALE GENOMIC DNA]</scope>
    <source>
        <strain>AF16</strain>
    </source>
</reference>
<name>NAS36_CAEBR</name>
<protein>
    <recommendedName>
        <fullName>Zinc metalloproteinase nas-36</fullName>
        <ecNumber evidence="2">3.4.24.-</ecNumber>
    </recommendedName>
    <alternativeName>
        <fullName>Nematode astacin 36</fullName>
    </alternativeName>
</protein>
<accession>Q61EX6</accession>
<accession>A8XE85</accession>